<sequence length="168" mass="19288">MNYYEVGKIVNTHGIKGELKIISKTDFPEDRFKPGNILYIRDNGKINSYEIKSHRTHKQFEMITFKGLENINLVENLKGKILEISEEQQENLSDGNYYHHQIIGLDVFSEDNNYIGVIKEIMSPGANDVWVVKRKGSSDLLLPAIKDVIKKIDLEQNKVIIELLDGLD</sequence>
<feature type="chain" id="PRO_1000001188" description="Ribosome maturation factor RimM">
    <location>
        <begin position="1"/>
        <end position="168"/>
    </location>
</feature>
<feature type="domain" description="PRC barrel" evidence="1">
    <location>
        <begin position="94"/>
        <end position="167"/>
    </location>
</feature>
<proteinExistence type="inferred from homology"/>
<protein>
    <recommendedName>
        <fullName evidence="1">Ribosome maturation factor RimM</fullName>
    </recommendedName>
</protein>
<organism>
    <name type="scientific">Ligilactobacillus salivarius (strain UCC118)</name>
    <name type="common">Lactobacillus salivarius</name>
    <dbReference type="NCBI Taxonomy" id="362948"/>
    <lineage>
        <taxon>Bacteria</taxon>
        <taxon>Bacillati</taxon>
        <taxon>Bacillota</taxon>
        <taxon>Bacilli</taxon>
        <taxon>Lactobacillales</taxon>
        <taxon>Lactobacillaceae</taxon>
        <taxon>Ligilactobacillus</taxon>
    </lineage>
</organism>
<gene>
    <name evidence="1" type="primary">rimM</name>
    <name type="ordered locus">LSL_0632</name>
</gene>
<dbReference type="EMBL" id="CP000233">
    <property type="protein sequence ID" value="ABD99442.1"/>
    <property type="molecule type" value="Genomic_DNA"/>
</dbReference>
<dbReference type="RefSeq" id="WP_003699991.1">
    <property type="nucleotide sequence ID" value="NC_007929.1"/>
</dbReference>
<dbReference type="RefSeq" id="YP_535525.1">
    <property type="nucleotide sequence ID" value="NC_007929.1"/>
</dbReference>
<dbReference type="SMR" id="Q1WU93"/>
<dbReference type="STRING" id="362948.LSL_0632"/>
<dbReference type="KEGG" id="lsl:LSL_0632"/>
<dbReference type="PATRIC" id="fig|362948.14.peg.712"/>
<dbReference type="HOGENOM" id="CLU_077636_3_1_9"/>
<dbReference type="OrthoDB" id="9810331at2"/>
<dbReference type="Proteomes" id="UP000006559">
    <property type="component" value="Chromosome"/>
</dbReference>
<dbReference type="GO" id="GO:0005737">
    <property type="term" value="C:cytoplasm"/>
    <property type="evidence" value="ECO:0007669"/>
    <property type="project" value="UniProtKB-SubCell"/>
</dbReference>
<dbReference type="GO" id="GO:0005840">
    <property type="term" value="C:ribosome"/>
    <property type="evidence" value="ECO:0007669"/>
    <property type="project" value="InterPro"/>
</dbReference>
<dbReference type="GO" id="GO:0043022">
    <property type="term" value="F:ribosome binding"/>
    <property type="evidence" value="ECO:0007669"/>
    <property type="project" value="InterPro"/>
</dbReference>
<dbReference type="GO" id="GO:0042274">
    <property type="term" value="P:ribosomal small subunit biogenesis"/>
    <property type="evidence" value="ECO:0007669"/>
    <property type="project" value="UniProtKB-UniRule"/>
</dbReference>
<dbReference type="GO" id="GO:0006364">
    <property type="term" value="P:rRNA processing"/>
    <property type="evidence" value="ECO:0007669"/>
    <property type="project" value="UniProtKB-UniRule"/>
</dbReference>
<dbReference type="Gene3D" id="2.30.30.240">
    <property type="entry name" value="PRC-barrel domain"/>
    <property type="match status" value="1"/>
</dbReference>
<dbReference type="Gene3D" id="2.40.30.60">
    <property type="entry name" value="RimM"/>
    <property type="match status" value="1"/>
</dbReference>
<dbReference type="HAMAP" id="MF_00014">
    <property type="entry name" value="Ribosome_mat_RimM"/>
    <property type="match status" value="1"/>
</dbReference>
<dbReference type="InterPro" id="IPR011033">
    <property type="entry name" value="PRC_barrel-like_sf"/>
</dbReference>
<dbReference type="InterPro" id="IPR056792">
    <property type="entry name" value="PRC_RimM"/>
</dbReference>
<dbReference type="InterPro" id="IPR011961">
    <property type="entry name" value="RimM"/>
</dbReference>
<dbReference type="InterPro" id="IPR002676">
    <property type="entry name" value="RimM_N"/>
</dbReference>
<dbReference type="InterPro" id="IPR036976">
    <property type="entry name" value="RimM_N_sf"/>
</dbReference>
<dbReference type="InterPro" id="IPR009000">
    <property type="entry name" value="Transl_B-barrel_sf"/>
</dbReference>
<dbReference type="NCBIfam" id="TIGR02273">
    <property type="entry name" value="16S_RimM"/>
    <property type="match status" value="1"/>
</dbReference>
<dbReference type="PANTHER" id="PTHR33692">
    <property type="entry name" value="RIBOSOME MATURATION FACTOR RIMM"/>
    <property type="match status" value="1"/>
</dbReference>
<dbReference type="PANTHER" id="PTHR33692:SF1">
    <property type="entry name" value="RIBOSOME MATURATION FACTOR RIMM"/>
    <property type="match status" value="1"/>
</dbReference>
<dbReference type="Pfam" id="PF24986">
    <property type="entry name" value="PRC_RimM"/>
    <property type="match status" value="1"/>
</dbReference>
<dbReference type="Pfam" id="PF01782">
    <property type="entry name" value="RimM"/>
    <property type="match status" value="1"/>
</dbReference>
<dbReference type="SUPFAM" id="SSF50346">
    <property type="entry name" value="PRC-barrel domain"/>
    <property type="match status" value="1"/>
</dbReference>
<dbReference type="SUPFAM" id="SSF50447">
    <property type="entry name" value="Translation proteins"/>
    <property type="match status" value="1"/>
</dbReference>
<accession>Q1WU93</accession>
<evidence type="ECO:0000255" key="1">
    <source>
        <dbReference type="HAMAP-Rule" id="MF_00014"/>
    </source>
</evidence>
<reference key="1">
    <citation type="journal article" date="2006" name="Proc. Natl. Acad. Sci. U.S.A.">
        <title>Multireplicon genome architecture of Lactobacillus salivarius.</title>
        <authorList>
            <person name="Claesson M.J."/>
            <person name="Li Y."/>
            <person name="Leahy S."/>
            <person name="Canchaya C."/>
            <person name="van Pijkeren J.P."/>
            <person name="Cerdeno-Tarraga A.M."/>
            <person name="Parkhill J."/>
            <person name="Flynn S."/>
            <person name="O'Sullivan G.C."/>
            <person name="Collins J.K."/>
            <person name="Higgins D."/>
            <person name="Shanahan F."/>
            <person name="Fitzgerald G.F."/>
            <person name="van Sinderen D."/>
            <person name="O'Toole P.W."/>
        </authorList>
    </citation>
    <scope>NUCLEOTIDE SEQUENCE [LARGE SCALE GENOMIC DNA]</scope>
    <source>
        <strain>UCC118</strain>
    </source>
</reference>
<name>RIMM_LIGS1</name>
<keyword id="KW-0143">Chaperone</keyword>
<keyword id="KW-0963">Cytoplasm</keyword>
<keyword id="KW-1185">Reference proteome</keyword>
<keyword id="KW-0690">Ribosome biogenesis</keyword>
<keyword id="KW-0698">rRNA processing</keyword>
<comment type="function">
    <text evidence="1">An accessory protein needed during the final step in the assembly of 30S ribosomal subunit, possibly for assembly of the head region. Essential for efficient processing of 16S rRNA. May be needed both before and after RbfA during the maturation of 16S rRNA. It has affinity for free ribosomal 30S subunits but not for 70S ribosomes.</text>
</comment>
<comment type="subunit">
    <text evidence="1">Binds ribosomal protein uS19.</text>
</comment>
<comment type="subcellular location">
    <subcellularLocation>
        <location evidence="1">Cytoplasm</location>
    </subcellularLocation>
</comment>
<comment type="domain">
    <text evidence="1">The PRC barrel domain binds ribosomal protein uS19.</text>
</comment>
<comment type="similarity">
    <text evidence="1">Belongs to the RimM family.</text>
</comment>